<comment type="function">
    <text evidence="1">Cytidylyltransferase required for protein O-linked mannosylation (By similarity). Catalyzes the formation of CDP-ribitol nucleotide sugar from D-ribitol 5-phosphate (By similarity). CDP-ribitol is a substrate of FKTN during the biosynthesis of the phosphorylated O-mannosyl trisaccharide (N-acetylgalactosamine-beta-3-N-acetylglucosamine-beta-4-(phosphate-6-)mannose), a carbohydrate structure present in alpha-dystroglycan (DAG1), which is required for binding laminin G-like domain-containing extracellular proteins with high affinity (By similarity). Shows activity toward other pentose phosphate sugars and mediates formation of CDP-ribulose or CDP-ribose using CTP and ribulose-5-phosphate or ribose-5-phosphate, respectively (By similarity). Not involved in dolichol production (By similarity).</text>
</comment>
<comment type="catalytic activity">
    <reaction evidence="1">
        <text>D-ribitol 5-phosphate + CTP + H(+) = CDP-L-ribitol + diphosphate</text>
        <dbReference type="Rhea" id="RHEA:12456"/>
        <dbReference type="ChEBI" id="CHEBI:15378"/>
        <dbReference type="ChEBI" id="CHEBI:33019"/>
        <dbReference type="ChEBI" id="CHEBI:37563"/>
        <dbReference type="ChEBI" id="CHEBI:57608"/>
        <dbReference type="ChEBI" id="CHEBI:57695"/>
        <dbReference type="EC" id="2.7.7.40"/>
    </reaction>
</comment>
<comment type="catalytic activity">
    <reaction evidence="1">
        <text>D-ribose 5-phosphate + CTP + H(+) = CDP-D-ribose + diphosphate</text>
        <dbReference type="Rhea" id="RHEA:53872"/>
        <dbReference type="ChEBI" id="CHEBI:15378"/>
        <dbReference type="ChEBI" id="CHEBI:33019"/>
        <dbReference type="ChEBI" id="CHEBI:37563"/>
        <dbReference type="ChEBI" id="CHEBI:78346"/>
        <dbReference type="ChEBI" id="CHEBI:137525"/>
    </reaction>
</comment>
<comment type="catalytic activity">
    <reaction evidence="1">
        <text>D-ribulose 5-phosphate + CTP + H(+) = CDP-D-ribulose + diphosphate</text>
        <dbReference type="Rhea" id="RHEA:53612"/>
        <dbReference type="ChEBI" id="CHEBI:15378"/>
        <dbReference type="ChEBI" id="CHEBI:33019"/>
        <dbReference type="ChEBI" id="CHEBI:37563"/>
        <dbReference type="ChEBI" id="CHEBI:58121"/>
        <dbReference type="ChEBI" id="CHEBI:137524"/>
    </reaction>
</comment>
<comment type="pathway">
    <text evidence="1">Protein modification; protein glycosylation.</text>
</comment>
<comment type="subunit">
    <text evidence="1">Homodimer.</text>
</comment>
<comment type="subcellular location">
    <subcellularLocation>
        <location evidence="1">Cytoplasm</location>
        <location evidence="1">Cytosol</location>
    </subcellularLocation>
</comment>
<comment type="alternative products">
    <event type="alternative splicing"/>
    <isoform>
        <id>Q5RJG7-1</id>
        <name>1</name>
        <sequence type="displayed"/>
    </isoform>
    <isoform>
        <id>Q5RJG7-2</id>
        <name>2</name>
        <sequence type="described" ref="VSP_034670 VSP_034671"/>
    </isoform>
    <isoform>
        <id>Q5RJG7-3</id>
        <name>3</name>
        <sequence type="described" ref="VSP_034668 VSP_034669"/>
    </isoform>
    <isoform>
        <id>Q5RJG7-4</id>
        <name>4</name>
        <sequence type="described" ref="VSP_034667 VSP_034668 VSP_034669"/>
    </isoform>
    <isoform>
        <id>Q5RJG7-5</id>
        <name>5</name>
        <sequence type="described" ref="VSP_034672 VSP_034673"/>
    </isoform>
</comment>
<comment type="similarity">
    <text evidence="5">Belongs to the IspD/TarI cytidylyltransferase family. IspD subfamily.</text>
</comment>
<comment type="sequence caution" evidence="5">
    <conflict type="frameshift">
        <sequence resource="EMBL-CDS" id="BAC32538"/>
    </conflict>
</comment>
<sequence length="447" mass="49136">MEPGPCSRPAEPGHCVSGPAGAGSAFPESPLSVAGAEPGNRPGTVAAVLPAGGCGERMGVRTPKQFCRVLERPLISYTLQAMERVCWIKDIVVTVTGENMEAMRSIIQRYGHKRISLAEAGATRHRSIFNGLKALAEDQPDCKLTKPEVVIIHDAVRPFVEEDILLRVVLAAKEHGAAGAIRPLVSTVISPSADGHLDHSLDRAKHRASEMPQAFLFDVIYEAYQQCSDFDLEFGTECLQLALKYCHRKAKLVEGPPALWKVTYKQDLCAAEAMIKEKISQEICVVMNTKDEESVGHLLEEALRKELNCMKITSTVMDHIGGDIRNFIEQCYSFICVNVVSPDSQETRKLLRILEESSLPLLYPVVVVLVHCFDFTSVPLAQKMESLVWIRGLAKEVKERNILLSGLLLNYSQDEQKLQESLGQSAAIIAALVKERNSALVGQLLVA</sequence>
<reference key="1">
    <citation type="journal article" date="2005" name="Science">
        <title>The transcriptional landscape of the mammalian genome.</title>
        <authorList>
            <person name="Carninci P."/>
            <person name="Kasukawa T."/>
            <person name="Katayama S."/>
            <person name="Gough J."/>
            <person name="Frith M.C."/>
            <person name="Maeda N."/>
            <person name="Oyama R."/>
            <person name="Ravasi T."/>
            <person name="Lenhard B."/>
            <person name="Wells C."/>
            <person name="Kodzius R."/>
            <person name="Shimokawa K."/>
            <person name="Bajic V.B."/>
            <person name="Brenner S.E."/>
            <person name="Batalov S."/>
            <person name="Forrest A.R."/>
            <person name="Zavolan M."/>
            <person name="Davis M.J."/>
            <person name="Wilming L.G."/>
            <person name="Aidinis V."/>
            <person name="Allen J.E."/>
            <person name="Ambesi-Impiombato A."/>
            <person name="Apweiler R."/>
            <person name="Aturaliya R.N."/>
            <person name="Bailey T.L."/>
            <person name="Bansal M."/>
            <person name="Baxter L."/>
            <person name="Beisel K.W."/>
            <person name="Bersano T."/>
            <person name="Bono H."/>
            <person name="Chalk A.M."/>
            <person name="Chiu K.P."/>
            <person name="Choudhary V."/>
            <person name="Christoffels A."/>
            <person name="Clutterbuck D.R."/>
            <person name="Crowe M.L."/>
            <person name="Dalla E."/>
            <person name="Dalrymple B.P."/>
            <person name="de Bono B."/>
            <person name="Della Gatta G."/>
            <person name="di Bernardo D."/>
            <person name="Down T."/>
            <person name="Engstrom P."/>
            <person name="Fagiolini M."/>
            <person name="Faulkner G."/>
            <person name="Fletcher C.F."/>
            <person name="Fukushima T."/>
            <person name="Furuno M."/>
            <person name="Futaki S."/>
            <person name="Gariboldi M."/>
            <person name="Georgii-Hemming P."/>
            <person name="Gingeras T.R."/>
            <person name="Gojobori T."/>
            <person name="Green R.E."/>
            <person name="Gustincich S."/>
            <person name="Harbers M."/>
            <person name="Hayashi Y."/>
            <person name="Hensch T.K."/>
            <person name="Hirokawa N."/>
            <person name="Hill D."/>
            <person name="Huminiecki L."/>
            <person name="Iacono M."/>
            <person name="Ikeo K."/>
            <person name="Iwama A."/>
            <person name="Ishikawa T."/>
            <person name="Jakt M."/>
            <person name="Kanapin A."/>
            <person name="Katoh M."/>
            <person name="Kawasawa Y."/>
            <person name="Kelso J."/>
            <person name="Kitamura H."/>
            <person name="Kitano H."/>
            <person name="Kollias G."/>
            <person name="Krishnan S.P."/>
            <person name="Kruger A."/>
            <person name="Kummerfeld S.K."/>
            <person name="Kurochkin I.V."/>
            <person name="Lareau L.F."/>
            <person name="Lazarevic D."/>
            <person name="Lipovich L."/>
            <person name="Liu J."/>
            <person name="Liuni S."/>
            <person name="McWilliam S."/>
            <person name="Madan Babu M."/>
            <person name="Madera M."/>
            <person name="Marchionni L."/>
            <person name="Matsuda H."/>
            <person name="Matsuzawa S."/>
            <person name="Miki H."/>
            <person name="Mignone F."/>
            <person name="Miyake S."/>
            <person name="Morris K."/>
            <person name="Mottagui-Tabar S."/>
            <person name="Mulder N."/>
            <person name="Nakano N."/>
            <person name="Nakauchi H."/>
            <person name="Ng P."/>
            <person name="Nilsson R."/>
            <person name="Nishiguchi S."/>
            <person name="Nishikawa S."/>
            <person name="Nori F."/>
            <person name="Ohara O."/>
            <person name="Okazaki Y."/>
            <person name="Orlando V."/>
            <person name="Pang K.C."/>
            <person name="Pavan W.J."/>
            <person name="Pavesi G."/>
            <person name="Pesole G."/>
            <person name="Petrovsky N."/>
            <person name="Piazza S."/>
            <person name="Reed J."/>
            <person name="Reid J.F."/>
            <person name="Ring B.Z."/>
            <person name="Ringwald M."/>
            <person name="Rost B."/>
            <person name="Ruan Y."/>
            <person name="Salzberg S.L."/>
            <person name="Sandelin A."/>
            <person name="Schneider C."/>
            <person name="Schoenbach C."/>
            <person name="Sekiguchi K."/>
            <person name="Semple C.A."/>
            <person name="Seno S."/>
            <person name="Sessa L."/>
            <person name="Sheng Y."/>
            <person name="Shibata Y."/>
            <person name="Shimada H."/>
            <person name="Shimada K."/>
            <person name="Silva D."/>
            <person name="Sinclair B."/>
            <person name="Sperling S."/>
            <person name="Stupka E."/>
            <person name="Sugiura K."/>
            <person name="Sultana R."/>
            <person name="Takenaka Y."/>
            <person name="Taki K."/>
            <person name="Tammoja K."/>
            <person name="Tan S.L."/>
            <person name="Tang S."/>
            <person name="Taylor M.S."/>
            <person name="Tegner J."/>
            <person name="Teichmann S.A."/>
            <person name="Ueda H.R."/>
            <person name="van Nimwegen E."/>
            <person name="Verardo R."/>
            <person name="Wei C.L."/>
            <person name="Yagi K."/>
            <person name="Yamanishi H."/>
            <person name="Zabarovsky E."/>
            <person name="Zhu S."/>
            <person name="Zimmer A."/>
            <person name="Hide W."/>
            <person name="Bult C."/>
            <person name="Grimmond S.M."/>
            <person name="Teasdale R.D."/>
            <person name="Liu E.T."/>
            <person name="Brusic V."/>
            <person name="Quackenbush J."/>
            <person name="Wahlestedt C."/>
            <person name="Mattick J.S."/>
            <person name="Hume D.A."/>
            <person name="Kai C."/>
            <person name="Sasaki D."/>
            <person name="Tomaru Y."/>
            <person name="Fukuda S."/>
            <person name="Kanamori-Katayama M."/>
            <person name="Suzuki M."/>
            <person name="Aoki J."/>
            <person name="Arakawa T."/>
            <person name="Iida J."/>
            <person name="Imamura K."/>
            <person name="Itoh M."/>
            <person name="Kato T."/>
            <person name="Kawaji H."/>
            <person name="Kawagashira N."/>
            <person name="Kawashima T."/>
            <person name="Kojima M."/>
            <person name="Kondo S."/>
            <person name="Konno H."/>
            <person name="Nakano K."/>
            <person name="Ninomiya N."/>
            <person name="Nishio T."/>
            <person name="Okada M."/>
            <person name="Plessy C."/>
            <person name="Shibata K."/>
            <person name="Shiraki T."/>
            <person name="Suzuki S."/>
            <person name="Tagami M."/>
            <person name="Waki K."/>
            <person name="Watahiki A."/>
            <person name="Okamura-Oho Y."/>
            <person name="Suzuki H."/>
            <person name="Kawai J."/>
            <person name="Hayashizaki Y."/>
        </authorList>
    </citation>
    <scope>NUCLEOTIDE SEQUENCE [LARGE SCALE MRNA] (ISOFORMS 2; 4 AND 5)</scope>
    <source>
        <strain>C57BL/6J</strain>
        <tissue>Cerebellum</tissue>
        <tissue>Corpora quadrigemina</tissue>
        <tissue>Hypothalamus</tissue>
    </source>
</reference>
<reference key="2">
    <citation type="journal article" date="2004" name="Genome Res.">
        <title>The status, quality, and expansion of the NIH full-length cDNA project: the Mammalian Gene Collection (MGC).</title>
        <authorList>
            <consortium name="The MGC Project Team"/>
        </authorList>
    </citation>
    <scope>NUCLEOTIDE SEQUENCE [LARGE SCALE MRNA] (ISOFORMS 1; 2 AND 3)</scope>
    <source>
        <strain>C57BL/6J</strain>
        <strain>Czech II</strain>
        <tissue>Eye</tissue>
        <tissue>Mammary tumor</tissue>
    </source>
</reference>
<organism>
    <name type="scientific">Mus musculus</name>
    <name type="common">Mouse</name>
    <dbReference type="NCBI Taxonomy" id="10090"/>
    <lineage>
        <taxon>Eukaryota</taxon>
        <taxon>Metazoa</taxon>
        <taxon>Chordata</taxon>
        <taxon>Craniata</taxon>
        <taxon>Vertebrata</taxon>
        <taxon>Euteleostomi</taxon>
        <taxon>Mammalia</taxon>
        <taxon>Eutheria</taxon>
        <taxon>Euarchontoglires</taxon>
        <taxon>Glires</taxon>
        <taxon>Rodentia</taxon>
        <taxon>Myomorpha</taxon>
        <taxon>Muroidea</taxon>
        <taxon>Muridae</taxon>
        <taxon>Murinae</taxon>
        <taxon>Mus</taxon>
        <taxon>Mus</taxon>
    </lineage>
</organism>
<feature type="chain" id="PRO_0000343698" description="D-ribitol-5-phosphate cytidylyltransferase">
    <location>
        <begin position="1"/>
        <end position="447"/>
    </location>
</feature>
<feature type="site" description="Transition state stabilizer" evidence="2">
    <location>
        <position position="57"/>
    </location>
</feature>
<feature type="site" description="Transition state stabilizer" evidence="2">
    <location>
        <position position="64"/>
    </location>
</feature>
<feature type="site" description="Positions substrate for the nucleophilic attack" evidence="2">
    <location>
        <position position="203"/>
    </location>
</feature>
<feature type="site" description="Positions substrate for the nucleophilic attack" evidence="2">
    <location>
        <position position="261"/>
    </location>
</feature>
<feature type="splice variant" id="VSP_034667" description="In isoform 4." evidence="4">
    <location>
        <begin position="1"/>
        <end position="99"/>
    </location>
</feature>
<feature type="splice variant" id="VSP_034668" description="In isoform 3 and isoform 4." evidence="3 4">
    <original>EKISQEICVV</original>
    <variation>GVFNLVTVSA</variation>
    <location>
        <begin position="277"/>
        <end position="286"/>
    </location>
</feature>
<feature type="splice variant" id="VSP_034669" description="In isoform 3 and isoform 4." evidence="3 4">
    <location>
        <begin position="287"/>
        <end position="447"/>
    </location>
</feature>
<feature type="splice variant" id="VSP_034670" description="In isoform 2." evidence="3 4">
    <original>CMKITSTVMDHIGGDI</original>
    <variation>VSIQRMTWIKCHTFLW</variation>
    <location>
        <begin position="309"/>
        <end position="324"/>
    </location>
</feature>
<feature type="splice variant" id="VSP_034671" description="In isoform 2." evidence="3 4">
    <location>
        <begin position="325"/>
        <end position="447"/>
    </location>
</feature>
<feature type="splice variant" id="VSP_034672" description="In isoform 5." evidence="4">
    <original>DEQKLQ</original>
    <variation>NFYYGG</variation>
    <location>
        <begin position="414"/>
        <end position="419"/>
    </location>
</feature>
<feature type="splice variant" id="VSP_034673" description="In isoform 5." evidence="4">
    <location>
        <begin position="420"/>
        <end position="447"/>
    </location>
</feature>
<feature type="sequence conflict" description="In Ref. 1; BAC31463." evidence="5" ref="1">
    <original>A</original>
    <variation>E</variation>
    <location>
        <position position="178"/>
    </location>
</feature>
<feature type="sequence conflict" description="In Ref. 2; AAI18039." evidence="5" ref="2">
    <original>S</original>
    <variation>N</variation>
    <location>
        <position position="228"/>
    </location>
</feature>
<feature type="sequence conflict" description="In Ref. 2; AAH24061." evidence="5" ref="2">
    <original>P</original>
    <variation>L</variation>
    <location>
        <position position="342"/>
    </location>
</feature>
<feature type="sequence conflict" description="In Ref. 2; AAH24061." evidence="5" ref="2">
    <original>R</original>
    <variation>H</variation>
    <location>
        <position position="352"/>
    </location>
</feature>
<keyword id="KW-0025">Alternative splicing</keyword>
<keyword id="KW-0963">Cytoplasm</keyword>
<keyword id="KW-0548">Nucleotidyltransferase</keyword>
<keyword id="KW-1185">Reference proteome</keyword>
<keyword id="KW-0808">Transferase</keyword>
<accession>Q5RJG7</accession>
<accession>Q148Q0</accession>
<accession>Q501J8</accession>
<accession>Q8BR14</accession>
<accession>Q8C934</accession>
<accession>Q8CAE0</accession>
<accession>Q8CIF0</accession>
<evidence type="ECO:0000250" key="1">
    <source>
        <dbReference type="UniProtKB" id="A4D126"/>
    </source>
</evidence>
<evidence type="ECO:0000250" key="2">
    <source>
        <dbReference type="UniProtKB" id="Q46893"/>
    </source>
</evidence>
<evidence type="ECO:0000303" key="3">
    <source>
    </source>
</evidence>
<evidence type="ECO:0000303" key="4">
    <source>
    </source>
</evidence>
<evidence type="ECO:0000305" key="5"/>
<evidence type="ECO:0000312" key="6">
    <source>
        <dbReference type="MGI" id="MGI:1923097"/>
    </source>
</evidence>
<name>ISPD_MOUSE</name>
<dbReference type="EC" id="2.7.7.40" evidence="1"/>
<dbReference type="EMBL" id="AK039004">
    <property type="protein sequence ID" value="BAC30199.1"/>
    <property type="molecule type" value="mRNA"/>
</dbReference>
<dbReference type="EMBL" id="AK043122">
    <property type="protein sequence ID" value="BAC31463.1"/>
    <property type="molecule type" value="mRNA"/>
</dbReference>
<dbReference type="EMBL" id="AK045940">
    <property type="protein sequence ID" value="BAC32538.1"/>
    <property type="status" value="ALT_FRAME"/>
    <property type="molecule type" value="mRNA"/>
</dbReference>
<dbReference type="EMBL" id="BC024061">
    <property type="protein sequence ID" value="AAH24061.1"/>
    <property type="molecule type" value="mRNA"/>
</dbReference>
<dbReference type="EMBL" id="BC086665">
    <property type="protein sequence ID" value="AAH86665.1"/>
    <property type="molecule type" value="mRNA"/>
</dbReference>
<dbReference type="EMBL" id="BC096030">
    <property type="protein sequence ID" value="AAH96030.1"/>
    <property type="molecule type" value="mRNA"/>
</dbReference>
<dbReference type="EMBL" id="BC118038">
    <property type="protein sequence ID" value="AAI18039.1"/>
    <property type="molecule type" value="mRNA"/>
</dbReference>
<dbReference type="CCDS" id="CCDS49051.1">
    <molecule id="Q5RJG7-1"/>
</dbReference>
<dbReference type="CCDS" id="CCDS88329.1">
    <molecule id="Q5RJG7-5"/>
</dbReference>
<dbReference type="CCDS" id="CCDS88330.1">
    <molecule id="Q5RJG7-3"/>
</dbReference>
<dbReference type="RefSeq" id="NP_001276431.1">
    <property type="nucleotide sequence ID" value="NM_001289502.1"/>
</dbReference>
<dbReference type="RefSeq" id="NP_001276432.1">
    <property type="nucleotide sequence ID" value="NM_001289503.1"/>
</dbReference>
<dbReference type="RefSeq" id="NP_001276433.1">
    <molecule id="Q5RJG7-3"/>
    <property type="nucleotide sequence ID" value="NM_001289504.1"/>
</dbReference>
<dbReference type="RefSeq" id="NP_001351234.1">
    <molecule id="Q5RJG7-5"/>
    <property type="nucleotide sequence ID" value="NM_001364305.1"/>
</dbReference>
<dbReference type="RefSeq" id="NP_848744.2">
    <molecule id="Q5RJG7-1"/>
    <property type="nucleotide sequence ID" value="NM_178629.6"/>
</dbReference>
<dbReference type="RefSeq" id="XP_006515307.1">
    <property type="nucleotide sequence ID" value="XM_006515244.3"/>
</dbReference>
<dbReference type="SMR" id="Q5RJG7"/>
<dbReference type="FunCoup" id="Q5RJG7">
    <property type="interactions" value="287"/>
</dbReference>
<dbReference type="STRING" id="10090.ENSMUSP00000061646"/>
<dbReference type="GlyGen" id="Q5RJG7">
    <property type="glycosylation" value="1 site, 1 O-linked glycan (1 site)"/>
</dbReference>
<dbReference type="iPTMnet" id="Q5RJG7"/>
<dbReference type="PhosphoSitePlus" id="Q5RJG7"/>
<dbReference type="PaxDb" id="10090-ENSMUSP00000061646"/>
<dbReference type="ProteomicsDB" id="301675">
    <molecule id="Q5RJG7-1"/>
</dbReference>
<dbReference type="ProteomicsDB" id="301676">
    <molecule id="Q5RJG7-2"/>
</dbReference>
<dbReference type="ProteomicsDB" id="301677">
    <molecule id="Q5RJG7-3"/>
</dbReference>
<dbReference type="ProteomicsDB" id="301678">
    <molecule id="Q5RJG7-4"/>
</dbReference>
<dbReference type="ProteomicsDB" id="301679">
    <molecule id="Q5RJG7-5"/>
</dbReference>
<dbReference type="Antibodypedia" id="43951">
    <property type="antibodies" value="100 antibodies from 15 providers"/>
</dbReference>
<dbReference type="DNASU" id="75847"/>
<dbReference type="Ensembl" id="ENSMUST00000062041.6">
    <molecule id="Q5RJG7-1"/>
    <property type="protein sequence ID" value="ENSMUSP00000061646.6"/>
    <property type="gene ID" value="ENSMUSG00000043153.7"/>
</dbReference>
<dbReference type="Ensembl" id="ENSMUST00000220519.2">
    <molecule id="Q5RJG7-3"/>
    <property type="protein sequence ID" value="ENSMUSP00000152423.2"/>
    <property type="gene ID" value="ENSMUSG00000043153.7"/>
</dbReference>
<dbReference type="Ensembl" id="ENSMUST00000221452.2">
    <molecule id="Q5RJG7-5"/>
    <property type="protein sequence ID" value="ENSMUSP00000152115.2"/>
    <property type="gene ID" value="ENSMUSG00000043153.7"/>
</dbReference>
<dbReference type="Ensembl" id="ENSMUST00000221895.2">
    <molecule id="Q5RJG7-2"/>
    <property type="protein sequence ID" value="ENSMUSP00000152392.2"/>
    <property type="gene ID" value="ENSMUSG00000043153.7"/>
</dbReference>
<dbReference type="Ensembl" id="ENSMUST00000223068.2">
    <molecule id="Q5RJG7-4"/>
    <property type="protein sequence ID" value="ENSMUSP00000152318.2"/>
    <property type="gene ID" value="ENSMUSG00000043153.7"/>
</dbReference>
<dbReference type="GeneID" id="75847"/>
<dbReference type="KEGG" id="mmu:75847"/>
<dbReference type="UCSC" id="uc007njy.3">
    <molecule id="Q5RJG7-3"/>
    <property type="organism name" value="mouse"/>
</dbReference>
<dbReference type="UCSC" id="uc007njz.3">
    <molecule id="Q5RJG7-2"/>
    <property type="organism name" value="mouse"/>
</dbReference>
<dbReference type="UCSC" id="uc007nkb.3">
    <molecule id="Q5RJG7-1"/>
    <property type="organism name" value="mouse"/>
</dbReference>
<dbReference type="UCSC" id="uc007nkd.1">
    <molecule id="Q5RJG7-4"/>
    <property type="organism name" value="mouse"/>
</dbReference>
<dbReference type="AGR" id="MGI:1923097"/>
<dbReference type="CTD" id="729920"/>
<dbReference type="MGI" id="MGI:1923097">
    <property type="gene designation" value="Crppa"/>
</dbReference>
<dbReference type="VEuPathDB" id="HostDB:ENSMUSG00000043153"/>
<dbReference type="eggNOG" id="ENOG502QUUE">
    <property type="taxonomic scope" value="Eukaryota"/>
</dbReference>
<dbReference type="GeneTree" id="ENSGT00390000006412"/>
<dbReference type="HOGENOM" id="CLU_033636_0_0_1"/>
<dbReference type="InParanoid" id="Q5RJG7"/>
<dbReference type="OMA" id="LKEWNFI"/>
<dbReference type="OrthoDB" id="414267at2759"/>
<dbReference type="PhylomeDB" id="Q5RJG7"/>
<dbReference type="TreeFam" id="TF328415"/>
<dbReference type="BRENDA" id="2.7.7.40">
    <property type="organism ID" value="3474"/>
</dbReference>
<dbReference type="UniPathway" id="UPA00378"/>
<dbReference type="BioGRID-ORCS" id="75847">
    <property type="hits" value="1 hit in 79 CRISPR screens"/>
</dbReference>
<dbReference type="ChiTaRS" id="Crppa">
    <property type="organism name" value="mouse"/>
</dbReference>
<dbReference type="PRO" id="PR:Q5RJG7"/>
<dbReference type="Proteomes" id="UP000000589">
    <property type="component" value="Chromosome 12"/>
</dbReference>
<dbReference type="RNAct" id="Q5RJG7">
    <property type="molecule type" value="protein"/>
</dbReference>
<dbReference type="Bgee" id="ENSMUSG00000043153">
    <property type="expression patterns" value="Expressed in lumbar dorsal root ganglion and 151 other cell types or tissues"/>
</dbReference>
<dbReference type="ExpressionAtlas" id="Q5RJG7">
    <property type="expression patterns" value="baseline and differential"/>
</dbReference>
<dbReference type="GO" id="GO:0005829">
    <property type="term" value="C:cytosol"/>
    <property type="evidence" value="ECO:0000250"/>
    <property type="project" value="UniProtKB"/>
</dbReference>
<dbReference type="GO" id="GO:0070567">
    <property type="term" value="F:cytidylyltransferase activity"/>
    <property type="evidence" value="ECO:0000250"/>
    <property type="project" value="UniProtKB"/>
</dbReference>
<dbReference type="GO" id="GO:0047349">
    <property type="term" value="F:D-ribitol-5-phosphate cytidylyltransferase activity"/>
    <property type="evidence" value="ECO:0000250"/>
    <property type="project" value="UniProtKB"/>
</dbReference>
<dbReference type="GO" id="GO:0042803">
    <property type="term" value="F:protein homodimerization activity"/>
    <property type="evidence" value="ECO:0000250"/>
    <property type="project" value="UniProtKB"/>
</dbReference>
<dbReference type="GO" id="GO:0007411">
    <property type="term" value="P:axon guidance"/>
    <property type="evidence" value="ECO:0000315"/>
    <property type="project" value="MGI"/>
</dbReference>
<dbReference type="GO" id="GO:0008299">
    <property type="term" value="P:isoprenoid biosynthetic process"/>
    <property type="evidence" value="ECO:0007669"/>
    <property type="project" value="InterPro"/>
</dbReference>
<dbReference type="GO" id="GO:0006486">
    <property type="term" value="P:protein glycosylation"/>
    <property type="evidence" value="ECO:0000315"/>
    <property type="project" value="MGI"/>
</dbReference>
<dbReference type="GO" id="GO:0035269">
    <property type="term" value="P:protein O-linked mannosylation"/>
    <property type="evidence" value="ECO:0000250"/>
    <property type="project" value="UniProtKB"/>
</dbReference>
<dbReference type="CDD" id="cd02516">
    <property type="entry name" value="CDP-ME_synthetase"/>
    <property type="match status" value="1"/>
</dbReference>
<dbReference type="FunFam" id="3.90.550.10:FF:000080">
    <property type="entry name" value="D-ribitol-5-phosphate cytidylyltransferase isoform X1"/>
    <property type="match status" value="1"/>
</dbReference>
<dbReference type="Gene3D" id="3.90.550.10">
    <property type="entry name" value="Spore Coat Polysaccharide Biosynthesis Protein SpsA, Chain A"/>
    <property type="match status" value="1"/>
</dbReference>
<dbReference type="InterPro" id="IPR034683">
    <property type="entry name" value="IspD/TarI"/>
</dbReference>
<dbReference type="InterPro" id="IPR040635">
    <property type="entry name" value="ISPD_C"/>
</dbReference>
<dbReference type="InterPro" id="IPR018294">
    <property type="entry name" value="ISPD_synthase_CS"/>
</dbReference>
<dbReference type="InterPro" id="IPR029044">
    <property type="entry name" value="Nucleotide-diphossugar_trans"/>
</dbReference>
<dbReference type="PANTHER" id="PTHR43015">
    <property type="entry name" value="D-RIBITOL-5-PHOSPHATE CYTIDYLYLTRANSFERASE"/>
    <property type="match status" value="1"/>
</dbReference>
<dbReference type="PANTHER" id="PTHR43015:SF1">
    <property type="entry name" value="D-RIBITOL-5-PHOSPHATE CYTIDYLYLTRANSFERASE"/>
    <property type="match status" value="1"/>
</dbReference>
<dbReference type="Pfam" id="PF01128">
    <property type="entry name" value="IspD"/>
    <property type="match status" value="1"/>
</dbReference>
<dbReference type="Pfam" id="PF18706">
    <property type="entry name" value="ISPD_C"/>
    <property type="match status" value="1"/>
</dbReference>
<dbReference type="SUPFAM" id="SSF53448">
    <property type="entry name" value="Nucleotide-diphospho-sugar transferases"/>
    <property type="match status" value="1"/>
</dbReference>
<dbReference type="PROSITE" id="PS01295">
    <property type="entry name" value="ISPD"/>
    <property type="match status" value="1"/>
</dbReference>
<protein>
    <recommendedName>
        <fullName evidence="1">D-ribitol-5-phosphate cytidylyltransferase</fullName>
        <ecNumber evidence="1">2.7.7.40</ecNumber>
    </recommendedName>
    <alternativeName>
        <fullName evidence="1">2-C-methyl-D-erythritol 4-phosphate cytidylyltransferase-like protein</fullName>
    </alternativeName>
    <alternativeName>
        <fullName evidence="6">Isoprenoid synthase domain-containing protein</fullName>
    </alternativeName>
</protein>
<proteinExistence type="evidence at transcript level"/>
<gene>
    <name type="primary">Crppa</name>
    <name evidence="6" type="synonym">Ispd</name>
</gene>